<name>KPPR2_CERSP</name>
<evidence type="ECO:0000255" key="1"/>
<evidence type="ECO:0000305" key="2"/>
<protein>
    <recommendedName>
        <fullName>Phosphoribulokinase 2</fullName>
        <shortName>PRKase 2</shortName>
        <ecNumber>2.7.1.19</ecNumber>
    </recommendedName>
    <alternativeName>
        <fullName>PRK II</fullName>
    </alternativeName>
    <alternativeName>
        <fullName>Phosphopentokinase 2</fullName>
    </alternativeName>
</protein>
<proteinExistence type="inferred from homology"/>
<feature type="chain" id="PRO_0000201958" description="Phosphoribulokinase 2">
    <location>
        <begin position="1"/>
        <end position="292"/>
    </location>
</feature>
<feature type="binding site" evidence="1">
    <location>
        <begin position="12"/>
        <end position="20"/>
    </location>
    <ligand>
        <name>ATP</name>
        <dbReference type="ChEBI" id="CHEBI:30616"/>
    </ligand>
</feature>
<accession>P23010</accession>
<reference key="1">
    <citation type="journal article" date="1990" name="Biochemistry">
        <title>The form II fructose 1,6-bisphosphatase and phosphoribulokinase genes form part of a large operon in Rhodobacter sphaeroides: primary structure and insertional mutagenesis analysis.</title>
        <authorList>
            <person name="Gibson J.L."/>
            <person name="Chen J.-H."/>
            <person name="Tower P.A."/>
            <person name="Tabita F.R."/>
        </authorList>
    </citation>
    <scope>NUCLEOTIDE SEQUENCE [GENOMIC DNA]</scope>
</reference>
<reference key="2">
    <citation type="journal article" date="1991" name="J. Biol. Chem.">
        <title>Identification, expression, and deduced primary structure of transketolase and other enzymes encoded within the form II CO2 fixation operon of Rhodobacter sphaeroides.</title>
        <authorList>
            <person name="Chen J.-H."/>
            <person name="Gibson J.L."/>
            <person name="McCue L.A."/>
            <person name="Tabita F.R."/>
        </authorList>
    </citation>
    <scope>NUCLEOTIDE SEQUENCE [GENOMIC DNA] OF 259-292</scope>
</reference>
<comment type="catalytic activity">
    <reaction>
        <text>D-ribulose 5-phosphate + ATP = D-ribulose 1,5-bisphosphate + ADP + H(+)</text>
        <dbReference type="Rhea" id="RHEA:19365"/>
        <dbReference type="ChEBI" id="CHEBI:15378"/>
        <dbReference type="ChEBI" id="CHEBI:30616"/>
        <dbReference type="ChEBI" id="CHEBI:57870"/>
        <dbReference type="ChEBI" id="CHEBI:58121"/>
        <dbReference type="ChEBI" id="CHEBI:456216"/>
        <dbReference type="EC" id="2.7.1.19"/>
    </reaction>
</comment>
<comment type="pathway">
    <text>Carbohydrate biosynthesis; Calvin cycle.</text>
</comment>
<comment type="similarity">
    <text evidence="2">Belongs to the phosphoribulokinase family.</text>
</comment>
<keyword id="KW-0067">ATP-binding</keyword>
<keyword id="KW-0113">Calvin cycle</keyword>
<keyword id="KW-0418">Kinase</keyword>
<keyword id="KW-0547">Nucleotide-binding</keyword>
<keyword id="KW-0602">Photosynthesis</keyword>
<keyword id="KW-0808">Transferase</keyword>
<gene>
    <name type="primary">prkB</name>
</gene>
<organism>
    <name type="scientific">Cereibacter sphaeroides</name>
    <name type="common">Rhodobacter sphaeroides</name>
    <dbReference type="NCBI Taxonomy" id="1063"/>
    <lineage>
        <taxon>Bacteria</taxon>
        <taxon>Pseudomonadati</taxon>
        <taxon>Pseudomonadota</taxon>
        <taxon>Alphaproteobacteria</taxon>
        <taxon>Rhodobacterales</taxon>
        <taxon>Paracoccaceae</taxon>
        <taxon>Cereibacter</taxon>
    </lineage>
</organism>
<dbReference type="EC" id="2.7.1.19"/>
<dbReference type="EMBL" id="J02922">
    <property type="protein sequence ID" value="AAA26106.1"/>
    <property type="molecule type" value="Genomic_DNA"/>
</dbReference>
<dbReference type="EMBL" id="M68914">
    <property type="protein sequence ID" value="AAA26154.1"/>
    <property type="molecule type" value="Genomic_DNA"/>
</dbReference>
<dbReference type="PIR" id="B35819">
    <property type="entry name" value="B35819"/>
</dbReference>
<dbReference type="SMR" id="P23010"/>
<dbReference type="UniPathway" id="UPA00116"/>
<dbReference type="GO" id="GO:0005524">
    <property type="term" value="F:ATP binding"/>
    <property type="evidence" value="ECO:0007669"/>
    <property type="project" value="UniProtKB-KW"/>
</dbReference>
<dbReference type="GO" id="GO:0008974">
    <property type="term" value="F:phosphoribulokinase activity"/>
    <property type="evidence" value="ECO:0007669"/>
    <property type="project" value="UniProtKB-EC"/>
</dbReference>
<dbReference type="GO" id="GO:0019253">
    <property type="term" value="P:reductive pentose-phosphate cycle"/>
    <property type="evidence" value="ECO:0007669"/>
    <property type="project" value="UniProtKB-UniPathway"/>
</dbReference>
<dbReference type="Gene3D" id="3.40.50.300">
    <property type="entry name" value="P-loop containing nucleotide triphosphate hydrolases"/>
    <property type="match status" value="1"/>
</dbReference>
<dbReference type="InterPro" id="IPR027417">
    <property type="entry name" value="P-loop_NTPase"/>
</dbReference>
<dbReference type="InterPro" id="IPR006082">
    <property type="entry name" value="PRK"/>
</dbReference>
<dbReference type="InterPro" id="IPR006083">
    <property type="entry name" value="PRK/URK"/>
</dbReference>
<dbReference type="NCBIfam" id="NF011997">
    <property type="entry name" value="PRK15453.1"/>
    <property type="match status" value="1"/>
</dbReference>
<dbReference type="Pfam" id="PF00485">
    <property type="entry name" value="PRK"/>
    <property type="match status" value="1"/>
</dbReference>
<dbReference type="PRINTS" id="PR00478">
    <property type="entry name" value="PHRIBLKINASE"/>
</dbReference>
<dbReference type="SUPFAM" id="SSF52540">
    <property type="entry name" value="P-loop containing nucleoside triphosphate hydrolases"/>
    <property type="match status" value="1"/>
</dbReference>
<dbReference type="PROSITE" id="PS00567">
    <property type="entry name" value="PHOSPHORIBULOKINASE"/>
    <property type="match status" value="1"/>
</dbReference>
<sequence>MSKKYPIISVVGSSGAGTSTVKNTFEQIFRREGVKSVSIEGDAFHRFNRADMKAELERRYAAGDATFSHFSYEANELKELERVFREYGETGRGRTRTYVHDDAEAARTGVAPGNFTQWAPFEDNSDLLFYEGLHGCVVNDEVNLVRHADLKLGVAPVINLEWIQKIHRDRAQRGYTTEAVTDVILRRMYAYVHCIVPQFSETDINFQRVPVVDTSNPFIARWIPTPDESLIVIRFKNPRGIDCPYLTSMIAGSWMSRANSIVVPGNKQDLAMQLILTPLIERMVREARRARA</sequence>